<gene>
    <name type="primary">tbrg1</name>
    <name type="ORF">TEgg020g14.1</name>
</gene>
<keyword id="KW-0131">Cell cycle</keyword>
<keyword id="KW-0539">Nucleus</keyword>
<keyword id="KW-1185">Reference proteome</keyword>
<name>TBRG1_XENTR</name>
<proteinExistence type="evidence at transcript level"/>
<evidence type="ECO:0000250" key="1"/>
<evidence type="ECO:0000255" key="2">
    <source>
        <dbReference type="PROSITE-ProRule" id="PRU00875"/>
    </source>
</evidence>
<evidence type="ECO:0000255" key="3">
    <source>
        <dbReference type="PROSITE-ProRule" id="PRU00876"/>
    </source>
</evidence>
<evidence type="ECO:0000256" key="4">
    <source>
        <dbReference type="SAM" id="MobiDB-lite"/>
    </source>
</evidence>
<evidence type="ECO:0000305" key="5"/>
<organism>
    <name type="scientific">Xenopus tropicalis</name>
    <name type="common">Western clawed frog</name>
    <name type="synonym">Silurana tropicalis</name>
    <dbReference type="NCBI Taxonomy" id="8364"/>
    <lineage>
        <taxon>Eukaryota</taxon>
        <taxon>Metazoa</taxon>
        <taxon>Chordata</taxon>
        <taxon>Craniata</taxon>
        <taxon>Vertebrata</taxon>
        <taxon>Euteleostomi</taxon>
        <taxon>Amphibia</taxon>
        <taxon>Batrachia</taxon>
        <taxon>Anura</taxon>
        <taxon>Pipoidea</taxon>
        <taxon>Pipidae</taxon>
        <taxon>Xenopodinae</taxon>
        <taxon>Xenopus</taxon>
        <taxon>Silurana</taxon>
    </lineage>
</organism>
<sequence length="409" mass="45785">MNHSPATTFSPHSRYQELKVRNKKSTKKSHKEKYRLKCLRLRRVAKDMVFENAALCDEIARTEDKFIRAKEERRFLLKRLLQLQALSEEEPGTSHNSNVSAGYSVPDMAAMNEGNLDMCYSSVLDDGGSCKKVKKDKREKGKENKSEAMKKPSKKKRVTEGTTRKWVQPIALDPCGRPVFPIVLEGLTVYSLGEIISDRAGFHEKVAIYPVGFCSTRVYVGMKNPDQKCLYTCQIKDGGTGPQFEIVPDDDPQNSIVASSADECHSILLQKISTPLGKRFSTPDLAGAYFFGFTHPTIQNLIQSCPGARKCTGYQWVKFEVCRAGEEQVPRDICESSASVNFEAFQRQSFATINNSTALAGTLDLPEIHASHDYISTYQEIFLSHSQLASGMQHLKSPSNQYSPSRSSE</sequence>
<dbReference type="EMBL" id="CR761153">
    <property type="protein sequence ID" value="CAJ81813.1"/>
    <property type="molecule type" value="mRNA"/>
</dbReference>
<dbReference type="EMBL" id="BC081351">
    <property type="protein sequence ID" value="AAH81351.1"/>
    <property type="molecule type" value="mRNA"/>
</dbReference>
<dbReference type="RefSeq" id="NP_001008140.1">
    <property type="nucleotide sequence ID" value="NM_001008139.1"/>
</dbReference>
<dbReference type="RefSeq" id="XP_012812274.1">
    <property type="nucleotide sequence ID" value="XM_012956820.1"/>
</dbReference>
<dbReference type="SMR" id="Q66IH2"/>
<dbReference type="FunCoup" id="Q66IH2">
    <property type="interactions" value="2994"/>
</dbReference>
<dbReference type="STRING" id="8364.ENSXETP00000013315"/>
<dbReference type="PaxDb" id="8364-ENSXETP00000020169"/>
<dbReference type="DNASU" id="493502"/>
<dbReference type="GeneID" id="493502"/>
<dbReference type="KEGG" id="xtr:493502"/>
<dbReference type="AGR" id="Xenbase:XB-GENE-962046"/>
<dbReference type="CTD" id="84897"/>
<dbReference type="Xenbase" id="XB-GENE-962046">
    <property type="gene designation" value="tbrg1"/>
</dbReference>
<dbReference type="eggNOG" id="KOG4443">
    <property type="taxonomic scope" value="Eukaryota"/>
</dbReference>
<dbReference type="HOGENOM" id="CLU_037126_0_0_1"/>
<dbReference type="InParanoid" id="Q66IH2"/>
<dbReference type="OrthoDB" id="285793at2759"/>
<dbReference type="Proteomes" id="UP000008143">
    <property type="component" value="Chromosome 2"/>
</dbReference>
<dbReference type="GO" id="GO:0005634">
    <property type="term" value="C:nucleus"/>
    <property type="evidence" value="ECO:0007669"/>
    <property type="project" value="UniProtKB-SubCell"/>
</dbReference>
<dbReference type="Gene3D" id="3.30.160.360">
    <property type="match status" value="1"/>
</dbReference>
<dbReference type="InterPro" id="IPR003889">
    <property type="entry name" value="FYrich_C"/>
</dbReference>
<dbReference type="InterPro" id="IPR003888">
    <property type="entry name" value="FYrich_N"/>
</dbReference>
<dbReference type="InterPro" id="IPR040092">
    <property type="entry name" value="TBRG1"/>
</dbReference>
<dbReference type="PANTHER" id="PTHR22715">
    <property type="entry name" value="TRANSFORMING GROWTH FACTOR BETA REGULATED GENE 1"/>
    <property type="match status" value="1"/>
</dbReference>
<dbReference type="PANTHER" id="PTHR22715:SF0">
    <property type="entry name" value="TRANSFORMING GROWTH FACTOR BETA REGULATOR 1"/>
    <property type="match status" value="1"/>
</dbReference>
<dbReference type="Pfam" id="PF05965">
    <property type="entry name" value="FYRC"/>
    <property type="match status" value="1"/>
</dbReference>
<dbReference type="Pfam" id="PF05964">
    <property type="entry name" value="FYRN"/>
    <property type="match status" value="1"/>
</dbReference>
<dbReference type="SMART" id="SM00542">
    <property type="entry name" value="FYRC"/>
    <property type="match status" value="1"/>
</dbReference>
<dbReference type="SMART" id="SM00541">
    <property type="entry name" value="FYRN"/>
    <property type="match status" value="1"/>
</dbReference>
<dbReference type="PROSITE" id="PS51543">
    <property type="entry name" value="FYRC"/>
    <property type="match status" value="1"/>
</dbReference>
<dbReference type="PROSITE" id="PS51542">
    <property type="entry name" value="FYRN"/>
    <property type="match status" value="1"/>
</dbReference>
<comment type="function">
    <text>May act as a growth inhibitor. May be involved in maintaining chromosomal stability.</text>
</comment>
<comment type="subcellular location">
    <subcellularLocation>
        <location evidence="1">Nucleus</location>
    </subcellularLocation>
</comment>
<comment type="similarity">
    <text evidence="5">Belongs to the TBRG1 family.</text>
</comment>
<accession>Q66IH2</accession>
<reference key="1">
    <citation type="submission" date="2006-10" db="EMBL/GenBank/DDBJ databases">
        <authorList>
            <consortium name="Sanger Xenopus tropicalis EST/cDNA project"/>
        </authorList>
    </citation>
    <scope>NUCLEOTIDE SEQUENCE [LARGE SCALE MRNA]</scope>
    <source>
        <tissue>Egg</tissue>
    </source>
</reference>
<reference key="2">
    <citation type="submission" date="2004-08" db="EMBL/GenBank/DDBJ databases">
        <authorList>
            <consortium name="NIH - Xenopus Gene Collection (XGC) project"/>
        </authorList>
    </citation>
    <scope>NUCLEOTIDE SEQUENCE [LARGE SCALE MRNA]</scope>
    <source>
        <tissue>Embryo</tissue>
    </source>
</reference>
<protein>
    <recommendedName>
        <fullName>Transforming growth factor beta regulator 1</fullName>
    </recommendedName>
</protein>
<feature type="chain" id="PRO_0000274221" description="Transforming growth factor beta regulator 1">
    <location>
        <begin position="1"/>
        <end position="409"/>
    </location>
</feature>
<feature type="domain" description="FYR N-terminal" evidence="2">
    <location>
        <begin position="179"/>
        <end position="238"/>
    </location>
</feature>
<feature type="domain" description="FYR C-terminal" evidence="3">
    <location>
        <begin position="239"/>
        <end position="318"/>
    </location>
</feature>
<feature type="region of interest" description="Disordered" evidence="4">
    <location>
        <begin position="1"/>
        <end position="31"/>
    </location>
</feature>
<feature type="region of interest" description="Disordered" evidence="4">
    <location>
        <begin position="127"/>
        <end position="162"/>
    </location>
</feature>
<feature type="compositionally biased region" description="Polar residues" evidence="4">
    <location>
        <begin position="1"/>
        <end position="13"/>
    </location>
</feature>
<feature type="compositionally biased region" description="Basic residues" evidence="4">
    <location>
        <begin position="21"/>
        <end position="31"/>
    </location>
</feature>
<feature type="compositionally biased region" description="Basic and acidic residues" evidence="4">
    <location>
        <begin position="136"/>
        <end position="150"/>
    </location>
</feature>